<organism>
    <name type="scientific">Xenopus laevis</name>
    <name type="common">African clawed frog</name>
    <dbReference type="NCBI Taxonomy" id="8355"/>
    <lineage>
        <taxon>Eukaryota</taxon>
        <taxon>Metazoa</taxon>
        <taxon>Chordata</taxon>
        <taxon>Craniata</taxon>
        <taxon>Vertebrata</taxon>
        <taxon>Euteleostomi</taxon>
        <taxon>Amphibia</taxon>
        <taxon>Batrachia</taxon>
        <taxon>Anura</taxon>
        <taxon>Pipoidea</taxon>
        <taxon>Pipidae</taxon>
        <taxon>Xenopodinae</taxon>
        <taxon>Xenopus</taxon>
        <taxon>Xenopus</taxon>
    </lineage>
</organism>
<sequence>MTSSYYVSALFSKFTAGASLFPNPEPTSCSSLPNNSQRGAYGSGTGPFPSSVPSLYSSPLYQNPFPGYSLASDSYNLHCSSFDQNIPLLCNELPKADEAALHHQPDSHFRIYPWMRSSGPDRKRGRQTYTRYQTLELEKEFHFNRYLTRRRRIEIAHALCLTERQIKIWFQNRRMKWKKEHKEESDQTPDAGEESTAPTTTADDDKDKE</sequence>
<proteinExistence type="evidence at transcript level"/>
<evidence type="ECO:0000255" key="1">
    <source>
        <dbReference type="PROSITE-ProRule" id="PRU00108"/>
    </source>
</evidence>
<evidence type="ECO:0000256" key="2">
    <source>
        <dbReference type="SAM" id="MobiDB-lite"/>
    </source>
</evidence>
<evidence type="ECO:0000269" key="3">
    <source>
    </source>
</evidence>
<evidence type="ECO:0000269" key="4">
    <source>
    </source>
</evidence>
<evidence type="ECO:0000305" key="5"/>
<protein>
    <recommendedName>
        <fullName>Homeobox protein Hox-A7</fullName>
    </recommendedName>
    <alternativeName>
        <fullName>Xhox-36</fullName>
    </alternativeName>
    <alternativeName>
        <fullName>XlHbox-3</fullName>
    </alternativeName>
</protein>
<comment type="function">
    <text evidence="4">Sequence-specific transcription factor which is part of a developmental regulatory system that provides cells with specific positional identities on the anterior-posterior axis.</text>
</comment>
<comment type="subcellular location">
    <subcellularLocation>
        <location>Nucleus</location>
    </subcellularLocation>
</comment>
<comment type="developmental stage">
    <text>Expressed exclusively in the posterior mesoderm and ectoderm of early Xenopus embryos.</text>
</comment>
<comment type="induction">
    <text evidence="3">By derriere.</text>
</comment>
<comment type="similarity">
    <text evidence="5">Belongs to the Antp homeobox family.</text>
</comment>
<comment type="sequence caution" evidence="5">
    <conflict type="erroneous initiation">
        <sequence resource="EMBL-CDS" id="CAA30124"/>
    </conflict>
</comment>
<name>HXA7_XENLA</name>
<gene>
    <name type="primary">hoxa7</name>
</gene>
<keyword id="KW-0217">Developmental protein</keyword>
<keyword id="KW-0238">DNA-binding</keyword>
<keyword id="KW-0371">Homeobox</keyword>
<keyword id="KW-0539">Nucleus</keyword>
<keyword id="KW-1185">Reference proteome</keyword>
<keyword id="KW-0804">Transcription</keyword>
<keyword id="KW-0805">Transcription regulation</keyword>
<accession>P09071</accession>
<feature type="chain" id="PRO_0000200079" description="Homeobox protein Hox-A7">
    <location>
        <begin position="1"/>
        <end position="209"/>
    </location>
</feature>
<feature type="DNA-binding region" description="Homeobox" evidence="1">
    <location>
        <begin position="122"/>
        <end position="181"/>
    </location>
</feature>
<feature type="region of interest" description="Disordered" evidence="2">
    <location>
        <begin position="25"/>
        <end position="44"/>
    </location>
</feature>
<feature type="region of interest" description="Disordered" evidence="2">
    <location>
        <begin position="179"/>
        <end position="209"/>
    </location>
</feature>
<feature type="short sequence motif" description="Antp-type hexapeptide">
    <location>
        <begin position="111"/>
        <end position="116"/>
    </location>
</feature>
<feature type="compositionally biased region" description="Polar residues" evidence="2">
    <location>
        <begin position="26"/>
        <end position="38"/>
    </location>
</feature>
<reference key="1">
    <citation type="journal article" date="1987" name="Development">
        <title>Posterior expression of a homeobox gene in early Xenopus embryos.</title>
        <authorList>
            <person name="Condie B.G."/>
            <person name="Harland R.M."/>
        </authorList>
    </citation>
    <scope>NUCLEOTIDE SEQUENCE [MRNA]</scope>
    <scope>FUNCTION</scope>
    <scope>TISSUE SPECIFICITY</scope>
</reference>
<reference key="2">
    <citation type="journal article" date="1988" name="Nucleic Acids Res.">
        <title>Xenopus homeobox-containing cDNAs expressed in early development.</title>
        <authorList>
            <person name="Fritz A."/>
            <person name="De Robertis E.M."/>
        </authorList>
    </citation>
    <scope>NUCLEOTIDE SEQUENCE [MRNA] OF 119-209</scope>
</reference>
<reference key="3">
    <citation type="journal article" date="1999" name="Development">
        <title>derriere: a TGF-beta family member required for posterior development in Xenopus.</title>
        <authorList>
            <person name="Sun B.I."/>
            <person name="Bush S.M."/>
            <person name="Collins-Racie L.A."/>
            <person name="LaVallie E.R."/>
            <person name="DiBlasio-Smith E.A."/>
            <person name="Wolfman N.M."/>
            <person name="McCoy J.M."/>
            <person name="Sive H.L."/>
        </authorList>
    </citation>
    <scope>INDUCTION</scope>
</reference>
<dbReference type="EMBL" id="M24752">
    <property type="protein sequence ID" value="AAA49753.1"/>
    <property type="molecule type" value="mRNA"/>
</dbReference>
<dbReference type="EMBL" id="X07103">
    <property type="protein sequence ID" value="CAA30124.1"/>
    <property type="status" value="ALT_INIT"/>
    <property type="molecule type" value="mRNA"/>
</dbReference>
<dbReference type="PIR" id="A43553">
    <property type="entry name" value="A43553"/>
</dbReference>
<dbReference type="RefSeq" id="NP_001082538.1">
    <property type="nucleotide sequence ID" value="NM_001089069.1"/>
</dbReference>
<dbReference type="SMR" id="P09071"/>
<dbReference type="GeneID" id="398549"/>
<dbReference type="KEGG" id="xla:398549"/>
<dbReference type="AGR" id="Xenbase:XB-GENE-865003"/>
<dbReference type="CTD" id="398549"/>
<dbReference type="Xenbase" id="XB-GENE-865003">
    <property type="gene designation" value="hoxa7.L"/>
</dbReference>
<dbReference type="OMA" id="YRMYPWM"/>
<dbReference type="OrthoDB" id="6159439at2759"/>
<dbReference type="Proteomes" id="UP000186698">
    <property type="component" value="Chromosome 6L"/>
</dbReference>
<dbReference type="Bgee" id="398549">
    <property type="expression patterns" value="Expressed in neurula embryo and 9 other cell types or tissues"/>
</dbReference>
<dbReference type="GO" id="GO:0005634">
    <property type="term" value="C:nucleus"/>
    <property type="evidence" value="ECO:0000318"/>
    <property type="project" value="GO_Central"/>
</dbReference>
<dbReference type="GO" id="GO:0000981">
    <property type="term" value="F:DNA-binding transcription factor activity, RNA polymerase II-specific"/>
    <property type="evidence" value="ECO:0000318"/>
    <property type="project" value="GO_Central"/>
</dbReference>
<dbReference type="GO" id="GO:0000978">
    <property type="term" value="F:RNA polymerase II cis-regulatory region sequence-specific DNA binding"/>
    <property type="evidence" value="ECO:0000318"/>
    <property type="project" value="GO_Central"/>
</dbReference>
<dbReference type="GO" id="GO:0009952">
    <property type="term" value="P:anterior/posterior pattern specification"/>
    <property type="evidence" value="ECO:0000318"/>
    <property type="project" value="GO_Central"/>
</dbReference>
<dbReference type="GO" id="GO:0006357">
    <property type="term" value="P:regulation of transcription by RNA polymerase II"/>
    <property type="evidence" value="ECO:0000318"/>
    <property type="project" value="GO_Central"/>
</dbReference>
<dbReference type="CDD" id="cd00086">
    <property type="entry name" value="homeodomain"/>
    <property type="match status" value="1"/>
</dbReference>
<dbReference type="FunFam" id="1.10.10.60:FF:000017">
    <property type="entry name" value="Homeobox protein antennapedia"/>
    <property type="match status" value="1"/>
</dbReference>
<dbReference type="Gene3D" id="1.10.10.60">
    <property type="entry name" value="Homeodomain-like"/>
    <property type="match status" value="1"/>
</dbReference>
<dbReference type="InterPro" id="IPR050296">
    <property type="entry name" value="Antp_homeobox"/>
</dbReference>
<dbReference type="InterPro" id="IPR001356">
    <property type="entry name" value="HD"/>
</dbReference>
<dbReference type="InterPro" id="IPR020479">
    <property type="entry name" value="HD_metazoa"/>
</dbReference>
<dbReference type="InterPro" id="IPR017995">
    <property type="entry name" value="Homeobox_antennapedia"/>
</dbReference>
<dbReference type="InterPro" id="IPR001827">
    <property type="entry name" value="Homeobox_Antennapedia_CS"/>
</dbReference>
<dbReference type="InterPro" id="IPR017970">
    <property type="entry name" value="Homeobox_CS"/>
</dbReference>
<dbReference type="InterPro" id="IPR009057">
    <property type="entry name" value="Homeodomain-like_sf"/>
</dbReference>
<dbReference type="PANTHER" id="PTHR45659">
    <property type="entry name" value="HOMEOBOX PROTEIN HOX"/>
    <property type="match status" value="1"/>
</dbReference>
<dbReference type="PANTHER" id="PTHR45659:SF12">
    <property type="entry name" value="HOMEOBOX PROTEIN HOX-A7"/>
    <property type="match status" value="1"/>
</dbReference>
<dbReference type="Pfam" id="PF00046">
    <property type="entry name" value="Homeodomain"/>
    <property type="match status" value="1"/>
</dbReference>
<dbReference type="PRINTS" id="PR00025">
    <property type="entry name" value="ANTENNAPEDIA"/>
</dbReference>
<dbReference type="PRINTS" id="PR00024">
    <property type="entry name" value="HOMEOBOX"/>
</dbReference>
<dbReference type="SMART" id="SM00389">
    <property type="entry name" value="HOX"/>
    <property type="match status" value="1"/>
</dbReference>
<dbReference type="SUPFAM" id="SSF46689">
    <property type="entry name" value="Homeodomain-like"/>
    <property type="match status" value="1"/>
</dbReference>
<dbReference type="PROSITE" id="PS00032">
    <property type="entry name" value="ANTENNAPEDIA"/>
    <property type="match status" value="1"/>
</dbReference>
<dbReference type="PROSITE" id="PS00027">
    <property type="entry name" value="HOMEOBOX_1"/>
    <property type="match status" value="1"/>
</dbReference>
<dbReference type="PROSITE" id="PS50071">
    <property type="entry name" value="HOMEOBOX_2"/>
    <property type="match status" value="1"/>
</dbReference>